<geneLocation type="chloroplast"/>
<reference key="1">
    <citation type="journal article" date="2008" name="Theor. Appl. Genet.">
        <title>The complete nucleotide sequence of the cassava (Manihot esculenta) chloroplast genome and the evolution of atpF in Malpighiales: RNA editing and multiple losses of a group II intron.</title>
        <authorList>
            <person name="Daniell H."/>
            <person name="Wurdack K.J."/>
            <person name="Kanagaraj A."/>
            <person name="Lee S.-B."/>
            <person name="Saski C."/>
            <person name="Jansen R.K."/>
        </authorList>
    </citation>
    <scope>NUCLEOTIDE SEQUENCE [LARGE SCALE GENOMIC DNA]</scope>
    <source>
        <strain>cv. TME3</strain>
    </source>
</reference>
<feature type="chain" id="PRO_0000354363" description="Small ribosomal subunit protein uS19c">
    <location>
        <begin position="1"/>
        <end position="92"/>
    </location>
</feature>
<name>RR19_MANES</name>
<gene>
    <name evidence="1" type="primary">rps19</name>
</gene>
<comment type="function">
    <text evidence="1">Protein S19 forms a complex with S13 that binds strongly to the 16S ribosomal RNA.</text>
</comment>
<comment type="subcellular location">
    <subcellularLocation>
        <location>Plastid</location>
        <location>Chloroplast</location>
    </subcellularLocation>
</comment>
<comment type="similarity">
    <text evidence="1">Belongs to the universal ribosomal protein uS19 family.</text>
</comment>
<protein>
    <recommendedName>
        <fullName evidence="1">Small ribosomal subunit protein uS19c</fullName>
    </recommendedName>
    <alternativeName>
        <fullName evidence="2">30S ribosomal protein S19, chloroplastic</fullName>
    </alternativeName>
</protein>
<sequence>MTRSLKKNPFVANHLLKKINKLNNKAEKEIIVTWSRASTIIPTMIGHTIAIHNGKEHLPIYITDRMVGHKLGEFAPTLNFRGHAKNDNKSRR</sequence>
<proteinExistence type="inferred from homology"/>
<keyword id="KW-0150">Chloroplast</keyword>
<keyword id="KW-0934">Plastid</keyword>
<keyword id="KW-0687">Ribonucleoprotein</keyword>
<keyword id="KW-0689">Ribosomal protein</keyword>
<keyword id="KW-0694">RNA-binding</keyword>
<keyword id="KW-0699">rRNA-binding</keyword>
<organism>
    <name type="scientific">Manihot esculenta</name>
    <name type="common">Cassava</name>
    <name type="synonym">Jatropha manihot</name>
    <dbReference type="NCBI Taxonomy" id="3983"/>
    <lineage>
        <taxon>Eukaryota</taxon>
        <taxon>Viridiplantae</taxon>
        <taxon>Streptophyta</taxon>
        <taxon>Embryophyta</taxon>
        <taxon>Tracheophyta</taxon>
        <taxon>Spermatophyta</taxon>
        <taxon>Magnoliopsida</taxon>
        <taxon>eudicotyledons</taxon>
        <taxon>Gunneridae</taxon>
        <taxon>Pentapetalae</taxon>
        <taxon>rosids</taxon>
        <taxon>fabids</taxon>
        <taxon>Malpighiales</taxon>
        <taxon>Euphorbiaceae</taxon>
        <taxon>Crotonoideae</taxon>
        <taxon>Manihoteae</taxon>
        <taxon>Manihot</taxon>
    </lineage>
</organism>
<dbReference type="EMBL" id="EU117376">
    <property type="protein sequence ID" value="ABV66194.1"/>
    <property type="molecule type" value="Genomic_DNA"/>
</dbReference>
<dbReference type="RefSeq" id="YP_001718477.1">
    <property type="nucleotide sequence ID" value="NC_010433.1"/>
</dbReference>
<dbReference type="SMR" id="B1NWJ0"/>
<dbReference type="GeneID" id="6000005"/>
<dbReference type="KEGG" id="mesc:6000005"/>
<dbReference type="OrthoDB" id="2043at2759"/>
<dbReference type="GO" id="GO:0009507">
    <property type="term" value="C:chloroplast"/>
    <property type="evidence" value="ECO:0007669"/>
    <property type="project" value="UniProtKB-SubCell"/>
</dbReference>
<dbReference type="GO" id="GO:0015935">
    <property type="term" value="C:small ribosomal subunit"/>
    <property type="evidence" value="ECO:0007669"/>
    <property type="project" value="InterPro"/>
</dbReference>
<dbReference type="GO" id="GO:0019843">
    <property type="term" value="F:rRNA binding"/>
    <property type="evidence" value="ECO:0007669"/>
    <property type="project" value="UniProtKB-UniRule"/>
</dbReference>
<dbReference type="GO" id="GO:0003735">
    <property type="term" value="F:structural constituent of ribosome"/>
    <property type="evidence" value="ECO:0007669"/>
    <property type="project" value="InterPro"/>
</dbReference>
<dbReference type="GO" id="GO:0006412">
    <property type="term" value="P:translation"/>
    <property type="evidence" value="ECO:0007669"/>
    <property type="project" value="UniProtKB-UniRule"/>
</dbReference>
<dbReference type="FunFam" id="3.30.860.10:FF:000001">
    <property type="entry name" value="30S ribosomal protein S19"/>
    <property type="match status" value="1"/>
</dbReference>
<dbReference type="Gene3D" id="3.30.860.10">
    <property type="entry name" value="30s Ribosomal Protein S19, Chain A"/>
    <property type="match status" value="1"/>
</dbReference>
<dbReference type="HAMAP" id="MF_00531">
    <property type="entry name" value="Ribosomal_uS19"/>
    <property type="match status" value="1"/>
</dbReference>
<dbReference type="InterPro" id="IPR002222">
    <property type="entry name" value="Ribosomal_uS19"/>
</dbReference>
<dbReference type="InterPro" id="IPR005732">
    <property type="entry name" value="Ribosomal_uS19_bac-type"/>
</dbReference>
<dbReference type="InterPro" id="IPR020934">
    <property type="entry name" value="Ribosomal_uS19_CS"/>
</dbReference>
<dbReference type="InterPro" id="IPR023575">
    <property type="entry name" value="Ribosomal_uS19_SF"/>
</dbReference>
<dbReference type="NCBIfam" id="TIGR01050">
    <property type="entry name" value="rpsS_bact"/>
    <property type="match status" value="1"/>
</dbReference>
<dbReference type="PANTHER" id="PTHR11880">
    <property type="entry name" value="RIBOSOMAL PROTEIN S19P FAMILY MEMBER"/>
    <property type="match status" value="1"/>
</dbReference>
<dbReference type="PANTHER" id="PTHR11880:SF8">
    <property type="entry name" value="SMALL RIBOSOMAL SUBUNIT PROTEIN US19M"/>
    <property type="match status" value="1"/>
</dbReference>
<dbReference type="Pfam" id="PF00203">
    <property type="entry name" value="Ribosomal_S19"/>
    <property type="match status" value="1"/>
</dbReference>
<dbReference type="PIRSF" id="PIRSF002144">
    <property type="entry name" value="Ribosomal_S19"/>
    <property type="match status" value="1"/>
</dbReference>
<dbReference type="PRINTS" id="PR00975">
    <property type="entry name" value="RIBOSOMALS19"/>
</dbReference>
<dbReference type="SUPFAM" id="SSF54570">
    <property type="entry name" value="Ribosomal protein S19"/>
    <property type="match status" value="1"/>
</dbReference>
<dbReference type="PROSITE" id="PS00323">
    <property type="entry name" value="RIBOSOMAL_S19"/>
    <property type="match status" value="1"/>
</dbReference>
<accession>B1NWJ0</accession>
<evidence type="ECO:0000255" key="1">
    <source>
        <dbReference type="HAMAP-Rule" id="MF_00531"/>
    </source>
</evidence>
<evidence type="ECO:0000305" key="2"/>